<name>AAA1_MOUSE</name>
<keyword id="KW-0029">Amino-acid transport</keyword>
<keyword id="KW-1003">Cell membrane</keyword>
<keyword id="KW-1015">Disulfide bond</keyword>
<keyword id="KW-0472">Membrane</keyword>
<keyword id="KW-1185">Reference proteome</keyword>
<keyword id="KW-0812">Transmembrane</keyword>
<keyword id="KW-1133">Transmembrane helix</keyword>
<keyword id="KW-0813">Transport</keyword>
<protein>
    <recommendedName>
        <fullName>Asc-type amino acid transporter 1</fullName>
        <shortName evidence="9">Asc-1</shortName>
    </recommendedName>
    <alternativeName>
        <fullName>D-serine transporter</fullName>
    </alternativeName>
    <alternativeName>
        <fullName>Solute carrier family 7 member 10</fullName>
    </alternativeName>
</protein>
<accession>P63115</accession>
<accession>Q9CW25</accession>
<accession>Q9JMH8</accession>
<evidence type="ECO:0000250" key="1">
    <source>
        <dbReference type="UniProtKB" id="P63116"/>
    </source>
</evidence>
<evidence type="ECO:0000255" key="2"/>
<evidence type="ECO:0000256" key="3">
    <source>
        <dbReference type="SAM" id="MobiDB-lite"/>
    </source>
</evidence>
<evidence type="ECO:0000269" key="4">
    <source>
    </source>
</evidence>
<evidence type="ECO:0000269" key="5">
    <source>
    </source>
</evidence>
<evidence type="ECO:0000269" key="6">
    <source>
    </source>
</evidence>
<evidence type="ECO:0000269" key="7">
    <source>
    </source>
</evidence>
<evidence type="ECO:0000269" key="8">
    <source>
    </source>
</evidence>
<evidence type="ECO:0000303" key="9">
    <source>
    </source>
</evidence>
<evidence type="ECO:0000305" key="10"/>
<sequence>MRRDSDMASHIQQPGGHGNPGPAPSPSPGPGPGPGASERVALKKEIGLVSACTIIIGNIIGSGIFISPKGVLEHSGSVGLALFVWVLGGGVTALGSLCYAELGVAIPKSGGDYAYVTEIFGGLAGFLLLWSAVLIMYPTSLAVISMTFSNYVLQPVFPNCIPPATASRVLSMACLMLLTWVNSSSVRWATRIQVIFTGGKLLALSLIITVGFVQIFQGHFEELRPTNAFAFWMTPSVGHLALAFLQGSFAFSGWNFLNYVTEELVDPRKNLPRAIFISIPLVTFVYTFTNVAYFTAMSPQELLSSNAVAVTFGEKLLGYFSWVMPVSVALSTFGGINGYLFTSSRLCFSGAREGHLPSFLAMIHVRRCTPIPALLVCCGATAVIMLVGDTYTLINYVSFINYLCYGVTILGLLVLRWRRPALHRPIKVNLLVPVVYLVFWAFLLVFSFISEPMVCGVGIIIILTGVPIFFLGVFWRSKPKCVHRFTESMTRWGQELCFVVYPQGSLEEEENGPMGQPSPLPITDKPLKTQ</sequence>
<dbReference type="EMBL" id="AB026688">
    <property type="protein sequence ID" value="BAA93617.1"/>
    <property type="molecule type" value="mRNA"/>
</dbReference>
<dbReference type="EMBL" id="BC054765">
    <property type="protein sequence ID" value="AAH54765.1"/>
    <property type="molecule type" value="mRNA"/>
</dbReference>
<dbReference type="EMBL" id="AK005282">
    <property type="protein sequence ID" value="BAB23930.1"/>
    <property type="molecule type" value="mRNA"/>
</dbReference>
<dbReference type="CCDS" id="CCDS21146.1"/>
<dbReference type="RefSeq" id="NP_059090.3">
    <property type="nucleotide sequence ID" value="NM_017394.4"/>
</dbReference>
<dbReference type="SMR" id="P63115"/>
<dbReference type="FunCoup" id="P63115">
    <property type="interactions" value="51"/>
</dbReference>
<dbReference type="STRING" id="10090.ENSMUSP00000001854"/>
<dbReference type="TCDB" id="2.A.3.8.13">
    <property type="family name" value="the amino acid-polyamine-organocation (apc) family"/>
</dbReference>
<dbReference type="iPTMnet" id="P63115"/>
<dbReference type="PhosphoSitePlus" id="P63115"/>
<dbReference type="SwissPalm" id="P63115"/>
<dbReference type="jPOST" id="P63115"/>
<dbReference type="PaxDb" id="10090-ENSMUSP00000001854"/>
<dbReference type="ProteomicsDB" id="296429"/>
<dbReference type="Antibodypedia" id="47948">
    <property type="antibodies" value="111 antibodies from 20 providers"/>
</dbReference>
<dbReference type="DNASU" id="53896"/>
<dbReference type="Ensembl" id="ENSMUST00000001854.12">
    <property type="protein sequence ID" value="ENSMUSP00000001854.6"/>
    <property type="gene ID" value="ENSMUSG00000030495.13"/>
</dbReference>
<dbReference type="GeneID" id="53896"/>
<dbReference type="KEGG" id="mmu:53896"/>
<dbReference type="UCSC" id="uc009gjn.2">
    <property type="organism name" value="mouse"/>
</dbReference>
<dbReference type="AGR" id="MGI:1858261"/>
<dbReference type="CTD" id="56301"/>
<dbReference type="MGI" id="MGI:1858261">
    <property type="gene designation" value="Slc7a10"/>
</dbReference>
<dbReference type="VEuPathDB" id="HostDB:ENSMUSG00000030495"/>
<dbReference type="eggNOG" id="KOG1287">
    <property type="taxonomic scope" value="Eukaryota"/>
</dbReference>
<dbReference type="GeneTree" id="ENSGT00940000156469"/>
<dbReference type="HOGENOM" id="CLU_007946_3_0_1"/>
<dbReference type="InParanoid" id="P63115"/>
<dbReference type="OMA" id="PWRDVVP"/>
<dbReference type="OrthoDB" id="3257095at2759"/>
<dbReference type="PhylomeDB" id="P63115"/>
<dbReference type="TreeFam" id="TF313355"/>
<dbReference type="Reactome" id="R-MMU-210991">
    <property type="pathway name" value="Basigin interactions"/>
</dbReference>
<dbReference type="Reactome" id="R-MMU-352230">
    <property type="pathway name" value="Amino acid transport across the plasma membrane"/>
</dbReference>
<dbReference type="BioGRID-ORCS" id="53896">
    <property type="hits" value="3 hits in 77 CRISPR screens"/>
</dbReference>
<dbReference type="PRO" id="PR:P63115"/>
<dbReference type="Proteomes" id="UP000000589">
    <property type="component" value="Chromosome 7"/>
</dbReference>
<dbReference type="RNAct" id="P63115">
    <property type="molecule type" value="protein"/>
</dbReference>
<dbReference type="Bgee" id="ENSMUSG00000030495">
    <property type="expression patterns" value="Expressed in lumbar subsegment of spinal cord and 138 other cell types or tissues"/>
</dbReference>
<dbReference type="ExpressionAtlas" id="P63115">
    <property type="expression patterns" value="baseline and differential"/>
</dbReference>
<dbReference type="GO" id="GO:0005886">
    <property type="term" value="C:plasma membrane"/>
    <property type="evidence" value="ECO:0000314"/>
    <property type="project" value="UniProtKB"/>
</dbReference>
<dbReference type="GO" id="GO:0015175">
    <property type="term" value="F:neutral L-amino acid transmembrane transporter activity"/>
    <property type="evidence" value="ECO:0000314"/>
    <property type="project" value="UniProtKB"/>
</dbReference>
<dbReference type="GO" id="GO:0042941">
    <property type="term" value="P:D-alanine transmembrane transport"/>
    <property type="evidence" value="ECO:0000315"/>
    <property type="project" value="MGI"/>
</dbReference>
<dbReference type="GO" id="GO:0042942">
    <property type="term" value="P:D-serine transmembrane transport"/>
    <property type="evidence" value="ECO:0000315"/>
    <property type="project" value="UniProtKB"/>
</dbReference>
<dbReference type="GO" id="GO:0015816">
    <property type="term" value="P:glycine transport"/>
    <property type="evidence" value="ECO:0000314"/>
    <property type="project" value="UniProtKB"/>
</dbReference>
<dbReference type="GO" id="GO:1903444">
    <property type="term" value="P:negative regulation of brown fat cell differentiation"/>
    <property type="evidence" value="ECO:0000315"/>
    <property type="project" value="UniProtKB"/>
</dbReference>
<dbReference type="GO" id="GO:0015804">
    <property type="term" value="P:neutral amino acid transport"/>
    <property type="evidence" value="ECO:0000314"/>
    <property type="project" value="UniProtKB"/>
</dbReference>
<dbReference type="GO" id="GO:0060094">
    <property type="term" value="P:positive regulation of synaptic transmission, glycinergic"/>
    <property type="evidence" value="ECO:0000315"/>
    <property type="project" value="UniProtKB"/>
</dbReference>
<dbReference type="FunFam" id="1.20.1740.10:FF:000008">
    <property type="entry name" value="large neutral amino acids transporter small subunit 2"/>
    <property type="match status" value="1"/>
</dbReference>
<dbReference type="Gene3D" id="1.20.1740.10">
    <property type="entry name" value="Amino acid/polyamine transporter I"/>
    <property type="match status" value="1"/>
</dbReference>
<dbReference type="InterPro" id="IPR002293">
    <property type="entry name" value="AA/rel_permease1"/>
</dbReference>
<dbReference type="InterPro" id="IPR050598">
    <property type="entry name" value="AminoAcid_Transporter"/>
</dbReference>
<dbReference type="PANTHER" id="PTHR11785">
    <property type="entry name" value="AMINO ACID TRANSPORTER"/>
    <property type="match status" value="1"/>
</dbReference>
<dbReference type="PANTHER" id="PTHR11785:SF73">
    <property type="entry name" value="ASC-TYPE AMINO ACID TRANSPORTER 1"/>
    <property type="match status" value="1"/>
</dbReference>
<dbReference type="Pfam" id="PF13520">
    <property type="entry name" value="AA_permease_2"/>
    <property type="match status" value="1"/>
</dbReference>
<dbReference type="PIRSF" id="PIRSF006060">
    <property type="entry name" value="AA_transporter"/>
    <property type="match status" value="1"/>
</dbReference>
<proteinExistence type="evidence at protein level"/>
<comment type="function">
    <text evidence="1 4 5 6 7">Associates with SLC3A2/4F2hc to form a functional heterodimeric complex that translocates small neutral L- and D-amino acids across the plasma membrane. Preferentially mediates exchange transport, but can also operate via facilitated diffusion (By similarity) (PubMed:10734121). Acts as a major transporter for glycine, L- and D-serine in the central nervous system. At the spinal cord and brainstem regulates glycine metabolism and glycinergic inhibitory neurotransmission by providing for glycine de novo synthesis from L-serine and glycine recycling from astrocytes to glycinergic motor neurons (PubMed:25755256, PubMed:27759100). At Schaffer collateral-CA1 synapses mediates D-serine and glycine release that modulates post-synaptic activation of NMDA receptors and excitatory glutamatergic transmission (By similarity). May regulate D-serine release from mesenchymal progenitors located in developing subcutaneous adipose tissue, favoring white adipocyte over thermogenic beige adipocyte lineage commitment (PubMed:33707431).</text>
</comment>
<comment type="catalytic activity">
    <reaction evidence="4">
        <text>L-alanine(in) + glycine(out) = L-alanine(out) + glycine(in)</text>
        <dbReference type="Rhea" id="RHEA:74019"/>
        <dbReference type="ChEBI" id="CHEBI:57305"/>
        <dbReference type="ChEBI" id="CHEBI:57972"/>
    </reaction>
</comment>
<comment type="catalytic activity">
    <reaction evidence="4">
        <text>L-serine(out) + L-alanine(in) = L-serine(in) + L-alanine(out)</text>
        <dbReference type="Rhea" id="RHEA:74023"/>
        <dbReference type="ChEBI" id="CHEBI:33384"/>
        <dbReference type="ChEBI" id="CHEBI:57972"/>
    </reaction>
</comment>
<comment type="catalytic activity">
    <reaction evidence="4">
        <text>L-threonine(out) + L-alanine(in) = L-threonine(in) + L-alanine(out)</text>
        <dbReference type="Rhea" id="RHEA:74027"/>
        <dbReference type="ChEBI" id="CHEBI:57926"/>
        <dbReference type="ChEBI" id="CHEBI:57972"/>
    </reaction>
</comment>
<comment type="catalytic activity">
    <reaction evidence="4">
        <text>L-cysteine(out) + L-alanine(in) = L-cysteine(in) + L-alanine(out)</text>
        <dbReference type="Rhea" id="RHEA:74031"/>
        <dbReference type="ChEBI" id="CHEBI:35235"/>
        <dbReference type="ChEBI" id="CHEBI:57972"/>
    </reaction>
</comment>
<comment type="catalytic activity">
    <reaction evidence="4">
        <text>2-aminoisobutanoate(out) + L-alanine(in) = 2-aminoisobutanoate(in) + L-alanine(out)</text>
        <dbReference type="Rhea" id="RHEA:74063"/>
        <dbReference type="ChEBI" id="CHEBI:57972"/>
        <dbReference type="ChEBI" id="CHEBI:193090"/>
    </reaction>
</comment>
<comment type="catalytic activity">
    <reaction evidence="4">
        <text>D-serine(out) + L-alanine(in) = D-serine(in) + L-alanine(out)</text>
        <dbReference type="Rhea" id="RHEA:74035"/>
        <dbReference type="ChEBI" id="CHEBI:35247"/>
        <dbReference type="ChEBI" id="CHEBI:57972"/>
    </reaction>
</comment>
<comment type="catalytic activity">
    <reaction evidence="4">
        <text>D-alanine(out) + L-alanine(in) = D-alanine(in) + L-alanine(out)</text>
        <dbReference type="Rhea" id="RHEA:74039"/>
        <dbReference type="ChEBI" id="CHEBI:57416"/>
        <dbReference type="ChEBI" id="CHEBI:57972"/>
    </reaction>
</comment>
<comment type="catalytic activity">
    <reaction evidence="4">
        <text>L-valine(out) + L-alanine(in) = L-valine(in) + L-alanine(out)</text>
        <dbReference type="Rhea" id="RHEA:74047"/>
        <dbReference type="ChEBI" id="CHEBI:57762"/>
        <dbReference type="ChEBI" id="CHEBI:57972"/>
    </reaction>
</comment>
<comment type="catalytic activity">
    <reaction evidence="4">
        <text>L-methionine(out) + L-alanine(in) = L-methionine(in) + L-alanine(out)</text>
        <dbReference type="Rhea" id="RHEA:74043"/>
        <dbReference type="ChEBI" id="CHEBI:57844"/>
        <dbReference type="ChEBI" id="CHEBI:57972"/>
    </reaction>
</comment>
<comment type="catalytic activity">
    <reaction evidence="4">
        <text>beta-alanine(out) + L-alanine(in) = beta-alanine(in) + L-alanine(out)</text>
        <dbReference type="Rhea" id="RHEA:74059"/>
        <dbReference type="ChEBI" id="CHEBI:57966"/>
        <dbReference type="ChEBI" id="CHEBI:57972"/>
    </reaction>
</comment>
<comment type="catalytic activity">
    <reaction evidence="4">
        <text>D-cysteine(out) + L-alanine(in) = D-cysteine(in) + L-alanine(out)</text>
        <dbReference type="Rhea" id="RHEA:74055"/>
        <dbReference type="ChEBI" id="CHEBI:35236"/>
        <dbReference type="ChEBI" id="CHEBI:57972"/>
    </reaction>
</comment>
<comment type="catalytic activity">
    <reaction evidence="4">
        <text>D-threonine(out) + L-alanine(in) = D-threonine(in) + L-alanine(out)</text>
        <dbReference type="Rhea" id="RHEA:74051"/>
        <dbReference type="ChEBI" id="CHEBI:57757"/>
        <dbReference type="ChEBI" id="CHEBI:57972"/>
    </reaction>
</comment>
<comment type="catalytic activity">
    <reaction evidence="1">
        <text>D-isoleucine(out) + D-serine(in) = D-isoleucine(in) + D-serine(out)</text>
        <dbReference type="Rhea" id="RHEA:74299"/>
        <dbReference type="ChEBI" id="CHEBI:35247"/>
        <dbReference type="ChEBI" id="CHEBI:193151"/>
    </reaction>
    <physiologicalReaction direction="left-to-right" evidence="1">
        <dbReference type="Rhea" id="RHEA:74300"/>
    </physiologicalReaction>
</comment>
<comment type="catalytic activity">
    <reaction evidence="1">
        <text>D-serine(in) = D-serine(out)</text>
        <dbReference type="Rhea" id="RHEA:29455"/>
        <dbReference type="ChEBI" id="CHEBI:35247"/>
    </reaction>
</comment>
<comment type="biophysicochemical properties">
    <kinetics>
        <KM evidence="4">23 uM for L-alanine</KM>
        <KM evidence="4">7.8 uM for glycine</KM>
        <KM evidence="4">11.3 uM for L-serine</KM>
        <KM evidence="4">19.3 uM for L-threonine</KM>
        <KM evidence="4">23.7 uM for L-cysteine</KM>
        <KM evidence="4">112 uM for L-valine</KM>
        <KM evidence="4">139 uM for L-methionine</KM>
        <KM evidence="4">160 uM for L-isoleucine</KM>
        <KM evidence="4">245 uM for L-leucine</KM>
        <KM evidence="4">368 uM for L-histidine</KM>
        <KM evidence="4">464 uM for L-phenylalanine</KM>
        <KM evidence="4">22.7 uM for 2-aminoisobutanoate</KM>
        <KM evidence="4">100 uM for D-alanine</KM>
        <KM evidence="4">52 uM for D-serine</KM>
        <KM evidence="4">281 uM for beta-alanine</KM>
    </kinetics>
    <phDependence>
        <text evidence="4">Active from pH 5.5 to 8.5.</text>
    </phDependence>
</comment>
<comment type="subunit">
    <text evidence="4">Disulfide-linked heterodimer with the amino acid transport protein SLC3A2/4F2hc.</text>
</comment>
<comment type="subcellular location">
    <subcellularLocation>
        <location evidence="7 8">Cell membrane</location>
        <topology evidence="2">Multi-pass membrane protein</topology>
    </subcellularLocation>
    <text evidence="7 8">Colocalizes with OLIG2 in astrocytic processes (PubMed:34749773). Localizes to the plasma membrane in mature adipocytes and to intracellular structures in preadipocytes (PubMed:33707431).</text>
</comment>
<comment type="tissue specificity">
    <text evidence="4 6 7 8">Highly expressed in brain and lung, and to a lesser extent in placenta and small intestine (PubMed:10734121). Expressed in a subpopulation of astrocytes enriched at glycinergic synapses in the spinal cord and brainstem (at protein level). Expressed in OLIG2-positive astrocytes of the lateral globus pallidus (at protein level) (PubMed:27759100, PubMed:34749773). Expressed in CD34-positive, DPP4-positive mesenchymal progenitors in developing subcutaneous adipose tissue (PubMed:33707431).</text>
</comment>
<comment type="induction">
    <text evidence="7">Up-regulated upon adipocyte differentiation in response to INS. Down-regulated by treatment with rosiglitazone.</text>
</comment>
<comment type="disruption phenotype">
    <text evidence="5">Mutant mice develop hyperekplexia-like phenotype due to impaired glycinergic inhibitory transmission. Administration of glycine and L-serine reverses the phenotype.</text>
</comment>
<comment type="similarity">
    <text evidence="10">Belongs to the amino acid-polyamine-organocation (APC) superfamily.</text>
</comment>
<organism>
    <name type="scientific">Mus musculus</name>
    <name type="common">Mouse</name>
    <dbReference type="NCBI Taxonomy" id="10090"/>
    <lineage>
        <taxon>Eukaryota</taxon>
        <taxon>Metazoa</taxon>
        <taxon>Chordata</taxon>
        <taxon>Craniata</taxon>
        <taxon>Vertebrata</taxon>
        <taxon>Euteleostomi</taxon>
        <taxon>Mammalia</taxon>
        <taxon>Eutheria</taxon>
        <taxon>Euarchontoglires</taxon>
        <taxon>Glires</taxon>
        <taxon>Rodentia</taxon>
        <taxon>Myomorpha</taxon>
        <taxon>Muroidea</taxon>
        <taxon>Muridae</taxon>
        <taxon>Murinae</taxon>
        <taxon>Mus</taxon>
        <taxon>Mus</taxon>
    </lineage>
</organism>
<feature type="chain" id="PRO_0000054277" description="Asc-type amino acid transporter 1">
    <location>
        <begin position="1"/>
        <end position="530"/>
    </location>
</feature>
<feature type="transmembrane region" description="Helical" evidence="2">
    <location>
        <begin position="46"/>
        <end position="66"/>
    </location>
</feature>
<feature type="transmembrane region" description="Helical" evidence="2">
    <location>
        <begin position="78"/>
        <end position="98"/>
    </location>
</feature>
<feature type="transmembrane region" description="Helical" evidence="2">
    <location>
        <begin position="119"/>
        <end position="139"/>
    </location>
</feature>
<feature type="transmembrane region" description="Helical" evidence="2">
    <location>
        <begin position="192"/>
        <end position="212"/>
    </location>
</feature>
<feature type="transmembrane region" description="Helical" evidence="2">
    <location>
        <begin position="274"/>
        <end position="294"/>
    </location>
</feature>
<feature type="transmembrane region" description="Helical" evidence="2">
    <location>
        <begin position="316"/>
        <end position="336"/>
    </location>
</feature>
<feature type="transmembrane region" description="Helical" evidence="2">
    <location>
        <begin position="368"/>
        <end position="388"/>
    </location>
</feature>
<feature type="transmembrane region" description="Helical" evidence="2">
    <location>
        <begin position="394"/>
        <end position="414"/>
    </location>
</feature>
<feature type="transmembrane region" description="Helical" evidence="2">
    <location>
        <begin position="430"/>
        <end position="450"/>
    </location>
</feature>
<feature type="transmembrane region" description="Helical" evidence="2">
    <location>
        <begin position="454"/>
        <end position="474"/>
    </location>
</feature>
<feature type="region of interest" description="Disordered" evidence="3">
    <location>
        <begin position="1"/>
        <end position="36"/>
    </location>
</feature>
<feature type="region of interest" description="Disordered" evidence="3">
    <location>
        <begin position="508"/>
        <end position="530"/>
    </location>
</feature>
<feature type="compositionally biased region" description="Pro residues" evidence="3">
    <location>
        <begin position="21"/>
        <end position="33"/>
    </location>
</feature>
<gene>
    <name type="primary">Slc7a10</name>
    <name type="synonym">Asc1</name>
</gene>
<reference key="1">
    <citation type="journal article" date="2000" name="J. Biol. Chem.">
        <title>Identification and characterization of a Na+-independent neutral amino acid transporter that associates with the 4F2 heavy chain and exhibits substrate selectivity for small neutral D- and L- amino acids.</title>
        <authorList>
            <person name="Fukasawa Y."/>
            <person name="Segawa H."/>
            <person name="Kim J.Y."/>
            <person name="Chairoungdua A."/>
            <person name="Kim D.K."/>
            <person name="Matsuo H."/>
            <person name="Cha S.H."/>
            <person name="Endou H."/>
            <person name="Kanai Y."/>
        </authorList>
    </citation>
    <scope>NUCLEOTIDE SEQUENCE [MRNA]</scope>
    <scope>FUNCTION</scope>
    <scope>TRANSPORT ACTIVITY</scope>
    <scope>BIOPHYSICOCHEMICAL PROPERTIES</scope>
    <scope>SUBUNIT</scope>
    <scope>TISSUE SPECIFICITY</scope>
    <source>
        <tissue>Brain</tissue>
    </source>
</reference>
<reference key="2">
    <citation type="journal article" date="2004" name="Genome Res.">
        <title>The status, quality, and expansion of the NIH full-length cDNA project: the Mammalian Gene Collection (MGC).</title>
        <authorList>
            <consortium name="The MGC Project Team"/>
        </authorList>
    </citation>
    <scope>NUCLEOTIDE SEQUENCE [LARGE SCALE MRNA]</scope>
    <source>
        <strain>C57BL/6J</strain>
        <tissue>Brain</tissue>
    </source>
</reference>
<reference key="3">
    <citation type="journal article" date="2005" name="Science">
        <title>The transcriptional landscape of the mammalian genome.</title>
        <authorList>
            <person name="Carninci P."/>
            <person name="Kasukawa T."/>
            <person name="Katayama S."/>
            <person name="Gough J."/>
            <person name="Frith M.C."/>
            <person name="Maeda N."/>
            <person name="Oyama R."/>
            <person name="Ravasi T."/>
            <person name="Lenhard B."/>
            <person name="Wells C."/>
            <person name="Kodzius R."/>
            <person name="Shimokawa K."/>
            <person name="Bajic V.B."/>
            <person name="Brenner S.E."/>
            <person name="Batalov S."/>
            <person name="Forrest A.R."/>
            <person name="Zavolan M."/>
            <person name="Davis M.J."/>
            <person name="Wilming L.G."/>
            <person name="Aidinis V."/>
            <person name="Allen J.E."/>
            <person name="Ambesi-Impiombato A."/>
            <person name="Apweiler R."/>
            <person name="Aturaliya R.N."/>
            <person name="Bailey T.L."/>
            <person name="Bansal M."/>
            <person name="Baxter L."/>
            <person name="Beisel K.W."/>
            <person name="Bersano T."/>
            <person name="Bono H."/>
            <person name="Chalk A.M."/>
            <person name="Chiu K.P."/>
            <person name="Choudhary V."/>
            <person name="Christoffels A."/>
            <person name="Clutterbuck D.R."/>
            <person name="Crowe M.L."/>
            <person name="Dalla E."/>
            <person name="Dalrymple B.P."/>
            <person name="de Bono B."/>
            <person name="Della Gatta G."/>
            <person name="di Bernardo D."/>
            <person name="Down T."/>
            <person name="Engstrom P."/>
            <person name="Fagiolini M."/>
            <person name="Faulkner G."/>
            <person name="Fletcher C.F."/>
            <person name="Fukushima T."/>
            <person name="Furuno M."/>
            <person name="Futaki S."/>
            <person name="Gariboldi M."/>
            <person name="Georgii-Hemming P."/>
            <person name="Gingeras T.R."/>
            <person name="Gojobori T."/>
            <person name="Green R.E."/>
            <person name="Gustincich S."/>
            <person name="Harbers M."/>
            <person name="Hayashi Y."/>
            <person name="Hensch T.K."/>
            <person name="Hirokawa N."/>
            <person name="Hill D."/>
            <person name="Huminiecki L."/>
            <person name="Iacono M."/>
            <person name="Ikeo K."/>
            <person name="Iwama A."/>
            <person name="Ishikawa T."/>
            <person name="Jakt M."/>
            <person name="Kanapin A."/>
            <person name="Katoh M."/>
            <person name="Kawasawa Y."/>
            <person name="Kelso J."/>
            <person name="Kitamura H."/>
            <person name="Kitano H."/>
            <person name="Kollias G."/>
            <person name="Krishnan S.P."/>
            <person name="Kruger A."/>
            <person name="Kummerfeld S.K."/>
            <person name="Kurochkin I.V."/>
            <person name="Lareau L.F."/>
            <person name="Lazarevic D."/>
            <person name="Lipovich L."/>
            <person name="Liu J."/>
            <person name="Liuni S."/>
            <person name="McWilliam S."/>
            <person name="Madan Babu M."/>
            <person name="Madera M."/>
            <person name="Marchionni L."/>
            <person name="Matsuda H."/>
            <person name="Matsuzawa S."/>
            <person name="Miki H."/>
            <person name="Mignone F."/>
            <person name="Miyake S."/>
            <person name="Morris K."/>
            <person name="Mottagui-Tabar S."/>
            <person name="Mulder N."/>
            <person name="Nakano N."/>
            <person name="Nakauchi H."/>
            <person name="Ng P."/>
            <person name="Nilsson R."/>
            <person name="Nishiguchi S."/>
            <person name="Nishikawa S."/>
            <person name="Nori F."/>
            <person name="Ohara O."/>
            <person name="Okazaki Y."/>
            <person name="Orlando V."/>
            <person name="Pang K.C."/>
            <person name="Pavan W.J."/>
            <person name="Pavesi G."/>
            <person name="Pesole G."/>
            <person name="Petrovsky N."/>
            <person name="Piazza S."/>
            <person name="Reed J."/>
            <person name="Reid J.F."/>
            <person name="Ring B.Z."/>
            <person name="Ringwald M."/>
            <person name="Rost B."/>
            <person name="Ruan Y."/>
            <person name="Salzberg S.L."/>
            <person name="Sandelin A."/>
            <person name="Schneider C."/>
            <person name="Schoenbach C."/>
            <person name="Sekiguchi K."/>
            <person name="Semple C.A."/>
            <person name="Seno S."/>
            <person name="Sessa L."/>
            <person name="Sheng Y."/>
            <person name="Shibata Y."/>
            <person name="Shimada H."/>
            <person name="Shimada K."/>
            <person name="Silva D."/>
            <person name="Sinclair B."/>
            <person name="Sperling S."/>
            <person name="Stupka E."/>
            <person name="Sugiura K."/>
            <person name="Sultana R."/>
            <person name="Takenaka Y."/>
            <person name="Taki K."/>
            <person name="Tammoja K."/>
            <person name="Tan S.L."/>
            <person name="Tang S."/>
            <person name="Taylor M.S."/>
            <person name="Tegner J."/>
            <person name="Teichmann S.A."/>
            <person name="Ueda H.R."/>
            <person name="van Nimwegen E."/>
            <person name="Verardo R."/>
            <person name="Wei C.L."/>
            <person name="Yagi K."/>
            <person name="Yamanishi H."/>
            <person name="Zabarovsky E."/>
            <person name="Zhu S."/>
            <person name="Zimmer A."/>
            <person name="Hide W."/>
            <person name="Bult C."/>
            <person name="Grimmond S.M."/>
            <person name="Teasdale R.D."/>
            <person name="Liu E.T."/>
            <person name="Brusic V."/>
            <person name="Quackenbush J."/>
            <person name="Wahlestedt C."/>
            <person name="Mattick J.S."/>
            <person name="Hume D.A."/>
            <person name="Kai C."/>
            <person name="Sasaki D."/>
            <person name="Tomaru Y."/>
            <person name="Fukuda S."/>
            <person name="Kanamori-Katayama M."/>
            <person name="Suzuki M."/>
            <person name="Aoki J."/>
            <person name="Arakawa T."/>
            <person name="Iida J."/>
            <person name="Imamura K."/>
            <person name="Itoh M."/>
            <person name="Kato T."/>
            <person name="Kawaji H."/>
            <person name="Kawagashira N."/>
            <person name="Kawashima T."/>
            <person name="Kojima M."/>
            <person name="Kondo S."/>
            <person name="Konno H."/>
            <person name="Nakano K."/>
            <person name="Ninomiya N."/>
            <person name="Nishio T."/>
            <person name="Okada M."/>
            <person name="Plessy C."/>
            <person name="Shibata K."/>
            <person name="Shiraki T."/>
            <person name="Suzuki S."/>
            <person name="Tagami M."/>
            <person name="Waki K."/>
            <person name="Watahiki A."/>
            <person name="Okamura-Oho Y."/>
            <person name="Suzuki H."/>
            <person name="Kawai J."/>
            <person name="Hayashizaki Y."/>
        </authorList>
    </citation>
    <scope>NUCLEOTIDE SEQUENCE [LARGE SCALE MRNA] OF 170-530</scope>
    <source>
        <strain>C57BL/6J</strain>
        <tissue>Cerebellum</tissue>
    </source>
</reference>
<reference key="4">
    <citation type="journal article" date="2015" name="EMBO Rep.">
        <title>The alanine-serine-cysteine-1 (Asc-1) transporter controls glycine levels in the brain and is required for glycinergic inhibitory transmission.</title>
        <authorList>
            <person name="Safory H."/>
            <person name="Neame S."/>
            <person name="Shulman Y."/>
            <person name="Zubedat S."/>
            <person name="Radzishevsky I."/>
            <person name="Rosenberg D."/>
            <person name="Sason H."/>
            <person name="Engelender S."/>
            <person name="Avital A."/>
            <person name="Huelsmann S."/>
            <person name="Schiller J."/>
            <person name="Wolosker H."/>
        </authorList>
    </citation>
    <scope>FUNCTION</scope>
    <scope>DISRUPTION PHENOTYPE</scope>
</reference>
<reference key="5">
    <citation type="journal article" date="2016" name="Sci. Rep.">
        <title>The astrocytic transporter SLC7A10 (Asc-1) mediates glycinergic inhibition of spinal cord motor neurons.</title>
        <authorList>
            <person name="Ehmsen J.T."/>
            <person name="Liu Y."/>
            <person name="Wang Y."/>
            <person name="Paladugu N."/>
            <person name="Johnson A.E."/>
            <person name="Rothstein J.D."/>
            <person name="du Lac S."/>
            <person name="Mattson M.P."/>
            <person name="Hoeke A."/>
        </authorList>
    </citation>
    <scope>FUNCTION</scope>
    <scope>TISSUE SPECIFICITY</scope>
</reference>
<reference key="6">
    <citation type="journal article" date="2021" name="Mol. Brain">
        <title>Olig2-astrocytes express neutral amino acid transporter SLC7A10 (Asc-1) in the adult brain.</title>
        <authorList>
            <person name="Tatsumi K."/>
            <person name="Kinugawa K."/>
            <person name="Isonishi A."/>
            <person name="Kitabatake M."/>
            <person name="Okuda H."/>
            <person name="Takemura S."/>
            <person name="Tanaka T."/>
            <person name="Mori E."/>
            <person name="Wanaka A."/>
        </authorList>
    </citation>
    <scope>SUBCELLULAR LOCATION</scope>
    <scope>TISSUE SPECIFICITY</scope>
</reference>
<reference key="7">
    <citation type="journal article" date="2021" name="Nat. Commun.">
        <title>Asc-1 regulates white versus beige adipocyte fate in a subcutaneous stromal cell population.</title>
        <authorList>
            <person name="Suwandhi L."/>
            <person name="Altun I."/>
            <person name="Karlina R."/>
            <person name="Miok V."/>
            <person name="Wiedemann T."/>
            <person name="Fischer D."/>
            <person name="Walzthoeni T."/>
            <person name="Lindner C."/>
            <person name="Boettcher A."/>
            <person name="Heinzmann S.S."/>
            <person name="Israel A."/>
            <person name="Khalil A.E.M.M."/>
            <person name="Braun A."/>
            <person name="Pramme-Steinwachs I."/>
            <person name="Burtscher I."/>
            <person name="Schmitt-Kopplin P."/>
            <person name="Heinig M."/>
            <person name="Elsner M."/>
            <person name="Lickert H."/>
            <person name="Theis F.J."/>
            <person name="Ussar S."/>
        </authorList>
    </citation>
    <scope>FUNCTION</scope>
    <scope>SUBCELLULAR LOCATION</scope>
    <scope>TISSUE SPECIFICITY</scope>
    <scope>INDUCTION</scope>
</reference>